<evidence type="ECO:0000256" key="1">
    <source>
        <dbReference type="SAM" id="MobiDB-lite"/>
    </source>
</evidence>
<evidence type="ECO:0000269" key="2">
    <source>
    </source>
</evidence>
<evidence type="ECO:0000305" key="3"/>
<dbReference type="EMBL" id="U13671">
    <property type="protein sequence ID" value="AAA66208.1"/>
    <property type="molecule type" value="mRNA"/>
</dbReference>
<dbReference type="EMBL" id="AAFI02000045">
    <property type="protein sequence ID" value="EAL66351.1"/>
    <property type="molecule type" value="Genomic_DNA"/>
</dbReference>
<dbReference type="RefSeq" id="XP_640343.1">
    <property type="nucleotide sequence ID" value="XM_635251.1"/>
</dbReference>
<dbReference type="SMR" id="P42526"/>
<dbReference type="FunCoup" id="P42526">
    <property type="interactions" value="4"/>
</dbReference>
<dbReference type="STRING" id="44689.P42526"/>
<dbReference type="iPTMnet" id="P42526"/>
<dbReference type="PaxDb" id="44689-DDB0215336"/>
<dbReference type="EnsemblProtists" id="EAL66351">
    <property type="protein sequence ID" value="EAL66351"/>
    <property type="gene ID" value="DDB_G0282143"/>
</dbReference>
<dbReference type="GeneID" id="8623444"/>
<dbReference type="KEGG" id="ddi:DDB_G0282143"/>
<dbReference type="dictyBase" id="DDB_G0282143">
    <property type="gene designation" value="hatB"/>
</dbReference>
<dbReference type="VEuPathDB" id="AmoebaDB:DDB_G0282141"/>
<dbReference type="eggNOG" id="ENOG502RI2J">
    <property type="taxonomic scope" value="Eukaryota"/>
</dbReference>
<dbReference type="HOGENOM" id="CLU_2077490_0_0_1"/>
<dbReference type="InParanoid" id="P42526"/>
<dbReference type="OMA" id="THHGHYL"/>
<dbReference type="PhylomeDB" id="P42526"/>
<dbReference type="PRO" id="PR:P42526"/>
<dbReference type="Proteomes" id="UP000002195">
    <property type="component" value="Chromosome 3"/>
</dbReference>
<dbReference type="GO" id="GO:0015629">
    <property type="term" value="C:actin cytoskeleton"/>
    <property type="evidence" value="ECO:0000318"/>
    <property type="project" value="GO_Central"/>
</dbReference>
<dbReference type="GO" id="GO:0030863">
    <property type="term" value="C:cortical cytoskeleton"/>
    <property type="evidence" value="ECO:0000314"/>
    <property type="project" value="dictyBase"/>
</dbReference>
<dbReference type="GO" id="GO:0005829">
    <property type="term" value="C:cytosol"/>
    <property type="evidence" value="ECO:0000314"/>
    <property type="project" value="dictyBase"/>
</dbReference>
<dbReference type="GO" id="GO:0045335">
    <property type="term" value="C:phagocytic vesicle"/>
    <property type="evidence" value="ECO:0007005"/>
    <property type="project" value="dictyBase"/>
</dbReference>
<dbReference type="GO" id="GO:0005886">
    <property type="term" value="C:plasma membrane"/>
    <property type="evidence" value="ECO:0000304"/>
    <property type="project" value="dictyBase"/>
</dbReference>
<dbReference type="GO" id="GO:0051015">
    <property type="term" value="F:actin filament binding"/>
    <property type="evidence" value="ECO:0000314"/>
    <property type="project" value="dictyBase"/>
</dbReference>
<dbReference type="GO" id="GO:0005504">
    <property type="term" value="F:fatty acid binding"/>
    <property type="evidence" value="ECO:0000314"/>
    <property type="project" value="dictyBase"/>
</dbReference>
<dbReference type="GO" id="GO:0008289">
    <property type="term" value="F:lipid binding"/>
    <property type="evidence" value="ECO:0000314"/>
    <property type="project" value="dictyBase"/>
</dbReference>
<dbReference type="GO" id="GO:0030674">
    <property type="term" value="F:protein-macromolecule adaptor activity"/>
    <property type="evidence" value="ECO:0007669"/>
    <property type="project" value="InterPro"/>
</dbReference>
<dbReference type="GO" id="GO:0030041">
    <property type="term" value="P:actin filament polymerization"/>
    <property type="evidence" value="ECO:0000318"/>
    <property type="project" value="GO_Central"/>
</dbReference>
<dbReference type="GO" id="GO:0006972">
    <property type="term" value="P:hyperosmotic response"/>
    <property type="evidence" value="ECO:0000315"/>
    <property type="project" value="dictyBase"/>
</dbReference>
<dbReference type="GO" id="GO:0010447">
    <property type="term" value="P:response to acidic pH"/>
    <property type="evidence" value="ECO:0000315"/>
    <property type="project" value="dictyBase"/>
</dbReference>
<dbReference type="CDD" id="cd23341">
    <property type="entry name" value="beta-trefoil_FSCN_HatAB"/>
    <property type="match status" value="1"/>
</dbReference>
<dbReference type="FunFam" id="2.80.10.50:FF:000112">
    <property type="entry name" value="Hisactophilin-1"/>
    <property type="match status" value="1"/>
</dbReference>
<dbReference type="Gene3D" id="2.80.10.50">
    <property type="match status" value="1"/>
</dbReference>
<dbReference type="InterPro" id="IPR008999">
    <property type="entry name" value="Actin-crosslinking"/>
</dbReference>
<dbReference type="InterPro" id="IPR022768">
    <property type="entry name" value="Fascin-like_dom"/>
</dbReference>
<dbReference type="InterPro" id="IPR052883">
    <property type="entry name" value="Hisactophilin"/>
</dbReference>
<dbReference type="PANTHER" id="PTHR33351">
    <property type="entry name" value="HISACTOPHILIN-1-RELATED"/>
    <property type="match status" value="1"/>
</dbReference>
<dbReference type="PANTHER" id="PTHR33351:SF1">
    <property type="entry name" value="IG-LIKE DOMAIN-CONTAINING PROTEIN-RELATED"/>
    <property type="match status" value="1"/>
</dbReference>
<dbReference type="Pfam" id="PF06268">
    <property type="entry name" value="Fascin"/>
    <property type="match status" value="1"/>
</dbReference>
<dbReference type="SUPFAM" id="SSF50405">
    <property type="entry name" value="Actin-crosslinking proteins"/>
    <property type="match status" value="1"/>
</dbReference>
<gene>
    <name type="primary">hatB</name>
    <name type="ORF">DDB_G0282143</name>
</gene>
<name>HATB_DICDI</name>
<proteinExistence type="evidence at protein level"/>
<protein>
    <recommendedName>
        <fullName>Hisactophilin-2</fullName>
    </recommendedName>
    <alternativeName>
        <fullName>Histidine-rich actin-binding protein 2</fullName>
        <shortName>HS II</shortName>
    </alternativeName>
</protein>
<comment type="function">
    <text>May act as an intracellular pH sensor that links chemotactic signals to responses in the microfilament system of the cells by nucleating actin polymerization or stabilizing the filaments.</text>
</comment>
<comment type="subunit">
    <text>Homodimer or heterodimer of hatA and hatB, linked by a disulfide bond.</text>
</comment>
<comment type="subcellular location">
    <subcellularLocation>
        <location>Cytoplasm</location>
    </subcellularLocation>
    <subcellularLocation>
        <location>Cell membrane</location>
        <topology>Lipid-anchor</topology>
        <orientation>Cytoplasmic side</orientation>
    </subcellularLocation>
</comment>
<comment type="PTM">
    <text evidence="2">Phosphorylated.</text>
</comment>
<comment type="similarity">
    <text evidence="3">Belongs to the hisactophilin family.</text>
</comment>
<keyword id="KW-0009">Actin-binding</keyword>
<keyword id="KW-1003">Cell membrane</keyword>
<keyword id="KW-0963">Cytoplasm</keyword>
<keyword id="KW-0903">Direct protein sequencing</keyword>
<keyword id="KW-1015">Disulfide bond</keyword>
<keyword id="KW-0449">Lipoprotein</keyword>
<keyword id="KW-0472">Membrane</keyword>
<keyword id="KW-0519">Myristate</keyword>
<keyword id="KW-0597">Phosphoprotein</keyword>
<keyword id="KW-1185">Reference proteome</keyword>
<keyword id="KW-0677">Repeat</keyword>
<organism>
    <name type="scientific">Dictyostelium discoideum</name>
    <name type="common">Social amoeba</name>
    <dbReference type="NCBI Taxonomy" id="44689"/>
    <lineage>
        <taxon>Eukaryota</taxon>
        <taxon>Amoebozoa</taxon>
        <taxon>Evosea</taxon>
        <taxon>Eumycetozoa</taxon>
        <taxon>Dictyostelia</taxon>
        <taxon>Dictyosteliales</taxon>
        <taxon>Dictyosteliaceae</taxon>
        <taxon>Dictyostelium</taxon>
    </lineage>
</organism>
<reference key="1">
    <citation type="journal article" date="1995" name="J. Biol. Chem.">
        <title>The pH-sensitive actin-binding protein hisactophilin of Dictyostelium exists in two isoforms which both are myristoylated and distributed between plasma membrane and cytoplasm.</title>
        <authorList>
            <person name="Hanakam F."/>
            <person name="Eckerskorn C."/>
            <person name="Lottspeich F."/>
            <person name="Mueller-Taubenberger A."/>
            <person name="Schaefer W."/>
            <person name="Gerisch G."/>
        </authorList>
    </citation>
    <scope>NUCLEOTIDE SEQUENCE [MRNA]</scope>
    <scope>PARTIAL PROTEIN SEQUENCE</scope>
    <scope>PHOSPHORYLATION</scope>
    <scope>MYRISTOYLATION AT GLY-2</scope>
    <source>
        <strain>AX2</strain>
        <strain>AX3</strain>
    </source>
</reference>
<reference key="2">
    <citation type="journal article" date="2005" name="Nature">
        <title>The genome of the social amoeba Dictyostelium discoideum.</title>
        <authorList>
            <person name="Eichinger L."/>
            <person name="Pachebat J.A."/>
            <person name="Gloeckner G."/>
            <person name="Rajandream M.A."/>
            <person name="Sucgang R."/>
            <person name="Berriman M."/>
            <person name="Song J."/>
            <person name="Olsen R."/>
            <person name="Szafranski K."/>
            <person name="Xu Q."/>
            <person name="Tunggal B."/>
            <person name="Kummerfeld S."/>
            <person name="Madera M."/>
            <person name="Konfortov B.A."/>
            <person name="Rivero F."/>
            <person name="Bankier A.T."/>
            <person name="Lehmann R."/>
            <person name="Hamlin N."/>
            <person name="Davies R."/>
            <person name="Gaudet P."/>
            <person name="Fey P."/>
            <person name="Pilcher K."/>
            <person name="Chen G."/>
            <person name="Saunders D."/>
            <person name="Sodergren E.J."/>
            <person name="Davis P."/>
            <person name="Kerhornou A."/>
            <person name="Nie X."/>
            <person name="Hall N."/>
            <person name="Anjard C."/>
            <person name="Hemphill L."/>
            <person name="Bason N."/>
            <person name="Farbrother P."/>
            <person name="Desany B."/>
            <person name="Just E."/>
            <person name="Morio T."/>
            <person name="Rost R."/>
            <person name="Churcher C.M."/>
            <person name="Cooper J."/>
            <person name="Haydock S."/>
            <person name="van Driessche N."/>
            <person name="Cronin A."/>
            <person name="Goodhead I."/>
            <person name="Muzny D.M."/>
            <person name="Mourier T."/>
            <person name="Pain A."/>
            <person name="Lu M."/>
            <person name="Harper D."/>
            <person name="Lindsay R."/>
            <person name="Hauser H."/>
            <person name="James K.D."/>
            <person name="Quiles M."/>
            <person name="Madan Babu M."/>
            <person name="Saito T."/>
            <person name="Buchrieser C."/>
            <person name="Wardroper A."/>
            <person name="Felder M."/>
            <person name="Thangavelu M."/>
            <person name="Johnson D."/>
            <person name="Knights A."/>
            <person name="Loulseged H."/>
            <person name="Mungall K.L."/>
            <person name="Oliver K."/>
            <person name="Price C."/>
            <person name="Quail M.A."/>
            <person name="Urushihara H."/>
            <person name="Hernandez J."/>
            <person name="Rabbinowitsch E."/>
            <person name="Steffen D."/>
            <person name="Sanders M."/>
            <person name="Ma J."/>
            <person name="Kohara Y."/>
            <person name="Sharp S."/>
            <person name="Simmonds M.N."/>
            <person name="Spiegler S."/>
            <person name="Tivey A."/>
            <person name="Sugano S."/>
            <person name="White B."/>
            <person name="Walker D."/>
            <person name="Woodward J.R."/>
            <person name="Winckler T."/>
            <person name="Tanaka Y."/>
            <person name="Shaulsky G."/>
            <person name="Schleicher M."/>
            <person name="Weinstock G.M."/>
            <person name="Rosenthal A."/>
            <person name="Cox E.C."/>
            <person name="Chisholm R.L."/>
            <person name="Gibbs R.A."/>
            <person name="Loomis W.F."/>
            <person name="Platzer M."/>
            <person name="Kay R.R."/>
            <person name="Williams J.G."/>
            <person name="Dear P.H."/>
            <person name="Noegel A.A."/>
            <person name="Barrell B.G."/>
            <person name="Kuspa A."/>
        </authorList>
    </citation>
    <scope>NUCLEOTIDE SEQUENCE [LARGE SCALE GENOMIC DNA]</scope>
    <source>
        <strain>AX4</strain>
    </source>
</reference>
<reference key="3">
    <citation type="journal article" date="2006" name="Mol. Cell. Proteomics">
        <title>Proteomics fingerprinting of phagosome maturation and evidence for the role of a Galpha during uptake.</title>
        <authorList>
            <person name="Gotthardt D."/>
            <person name="Blancheteau V."/>
            <person name="Bosserhoff A."/>
            <person name="Ruppert T."/>
            <person name="Delorenzi M."/>
            <person name="Soldati T."/>
        </authorList>
    </citation>
    <scope>IDENTIFICATION BY MASS SPECTROMETRY [LARGE SCALE ANALYSIS]</scope>
    <source>
        <strain>AX2</strain>
    </source>
</reference>
<feature type="initiator methionine" description="Removed">
    <location>
        <position position="1"/>
    </location>
</feature>
<feature type="chain" id="PRO_0000083905" description="Hisactophilin-2">
    <location>
        <begin position="2"/>
        <end position="118"/>
    </location>
</feature>
<feature type="repeat" description="1">
    <location>
        <begin position="34"/>
        <end position="46"/>
    </location>
</feature>
<feature type="repeat" description="2">
    <location>
        <begin position="74"/>
        <end position="86"/>
    </location>
</feature>
<feature type="region of interest" description="Contains several HHXH repeats">
    <location>
        <begin position="8"/>
        <end position="109"/>
    </location>
</feature>
<feature type="region of interest" description="2 X 13 AA approximate repeats">
    <location>
        <begin position="34"/>
        <end position="86"/>
    </location>
</feature>
<feature type="region of interest" description="Disordered" evidence="1">
    <location>
        <begin position="99"/>
        <end position="118"/>
    </location>
</feature>
<feature type="lipid moiety-binding region" description="N-myristoyl glycine" evidence="2">
    <location>
        <position position="2"/>
    </location>
</feature>
<sequence length="118" mass="13634">MGNRAFKAHNGHYLSAEHDHVKTHHGHHDHHTHFHIENHGSKVALRTHCGKYVSIGDHKQVYLSHHLHGDHSLFHLEHHHGKVSIKGHHHHYISVDGHGHVSTSHHHDHHATFEEHIL</sequence>
<accession>P42526</accession>
<accession>Q54SW6</accession>